<protein>
    <recommendedName>
        <fullName evidence="1">Ribosome-binding factor A</fullName>
    </recommendedName>
</protein>
<keyword id="KW-0963">Cytoplasm</keyword>
<keyword id="KW-1185">Reference proteome</keyword>
<keyword id="KW-0690">Ribosome biogenesis</keyword>
<accession>Q6MMS5</accession>
<evidence type="ECO:0000255" key="1">
    <source>
        <dbReference type="HAMAP-Rule" id="MF_00003"/>
    </source>
</evidence>
<feature type="chain" id="PRO_0000102624" description="Ribosome-binding factor A">
    <location>
        <begin position="1"/>
        <end position="134"/>
    </location>
</feature>
<dbReference type="EMBL" id="BX842650">
    <property type="protein sequence ID" value="CAE79428.1"/>
    <property type="molecule type" value="Genomic_DNA"/>
</dbReference>
<dbReference type="RefSeq" id="WP_011164030.1">
    <property type="nucleotide sequence ID" value="NC_005363.1"/>
</dbReference>
<dbReference type="SMR" id="Q6MMS5"/>
<dbReference type="STRING" id="264462.Bd1548"/>
<dbReference type="GeneID" id="93012545"/>
<dbReference type="KEGG" id="bba:Bd1548"/>
<dbReference type="eggNOG" id="COG0858">
    <property type="taxonomic scope" value="Bacteria"/>
</dbReference>
<dbReference type="HOGENOM" id="CLU_089475_6_5_7"/>
<dbReference type="Proteomes" id="UP000008080">
    <property type="component" value="Chromosome"/>
</dbReference>
<dbReference type="GO" id="GO:0005829">
    <property type="term" value="C:cytosol"/>
    <property type="evidence" value="ECO:0007669"/>
    <property type="project" value="TreeGrafter"/>
</dbReference>
<dbReference type="GO" id="GO:0043024">
    <property type="term" value="F:ribosomal small subunit binding"/>
    <property type="evidence" value="ECO:0007669"/>
    <property type="project" value="TreeGrafter"/>
</dbReference>
<dbReference type="GO" id="GO:0030490">
    <property type="term" value="P:maturation of SSU-rRNA"/>
    <property type="evidence" value="ECO:0007669"/>
    <property type="project" value="UniProtKB-UniRule"/>
</dbReference>
<dbReference type="Gene3D" id="3.30.300.20">
    <property type="match status" value="1"/>
</dbReference>
<dbReference type="HAMAP" id="MF_00003">
    <property type="entry name" value="RbfA"/>
    <property type="match status" value="1"/>
</dbReference>
<dbReference type="InterPro" id="IPR015946">
    <property type="entry name" value="KH_dom-like_a/b"/>
</dbReference>
<dbReference type="InterPro" id="IPR000238">
    <property type="entry name" value="RbfA"/>
</dbReference>
<dbReference type="InterPro" id="IPR023799">
    <property type="entry name" value="RbfA_dom_sf"/>
</dbReference>
<dbReference type="InterPro" id="IPR020053">
    <property type="entry name" value="Ribosome-bd_factorA_CS"/>
</dbReference>
<dbReference type="NCBIfam" id="TIGR00082">
    <property type="entry name" value="rbfA"/>
    <property type="match status" value="1"/>
</dbReference>
<dbReference type="PANTHER" id="PTHR33515">
    <property type="entry name" value="RIBOSOME-BINDING FACTOR A, CHLOROPLASTIC-RELATED"/>
    <property type="match status" value="1"/>
</dbReference>
<dbReference type="PANTHER" id="PTHR33515:SF1">
    <property type="entry name" value="RIBOSOME-BINDING FACTOR A, CHLOROPLASTIC-RELATED"/>
    <property type="match status" value="1"/>
</dbReference>
<dbReference type="Pfam" id="PF02033">
    <property type="entry name" value="RBFA"/>
    <property type="match status" value="1"/>
</dbReference>
<dbReference type="SUPFAM" id="SSF89919">
    <property type="entry name" value="Ribosome-binding factor A, RbfA"/>
    <property type="match status" value="1"/>
</dbReference>
<dbReference type="PROSITE" id="PS01319">
    <property type="entry name" value="RBFA"/>
    <property type="match status" value="1"/>
</dbReference>
<name>RBFA_BDEBA</name>
<sequence>MKNMGDGRRIARVEREIQATIAQFLIRGFKTPLPGLVTVASVKMPADLRAAKVYVSILGDEKQQDEALDLLQERAFEIQNYIGKELKMRYCPKLTFYLDHATEQVLKVEKILHELELERKANNPGEGSDESDDE</sequence>
<gene>
    <name evidence="1" type="primary">rbfA</name>
    <name type="ordered locus">Bd1548</name>
</gene>
<comment type="function">
    <text evidence="1">One of several proteins that assist in the late maturation steps of the functional core of the 30S ribosomal subunit. Associates with free 30S ribosomal subunits (but not with 30S subunits that are part of 70S ribosomes or polysomes). Required for efficient processing of 16S rRNA. May interact with the 5'-terminal helix region of 16S rRNA.</text>
</comment>
<comment type="subunit">
    <text evidence="1">Monomer. Binds 30S ribosomal subunits, but not 50S ribosomal subunits or 70S ribosomes.</text>
</comment>
<comment type="subcellular location">
    <subcellularLocation>
        <location evidence="1">Cytoplasm</location>
    </subcellularLocation>
</comment>
<comment type="similarity">
    <text evidence="1">Belongs to the RbfA family.</text>
</comment>
<reference key="1">
    <citation type="journal article" date="2004" name="Science">
        <title>A predator unmasked: life cycle of Bdellovibrio bacteriovorus from a genomic perspective.</title>
        <authorList>
            <person name="Rendulic S."/>
            <person name="Jagtap P."/>
            <person name="Rosinus A."/>
            <person name="Eppinger M."/>
            <person name="Baar C."/>
            <person name="Lanz C."/>
            <person name="Keller H."/>
            <person name="Lambert C."/>
            <person name="Evans K.J."/>
            <person name="Goesmann A."/>
            <person name="Meyer F."/>
            <person name="Sockett R.E."/>
            <person name="Schuster S.C."/>
        </authorList>
    </citation>
    <scope>NUCLEOTIDE SEQUENCE [LARGE SCALE GENOMIC DNA]</scope>
    <source>
        <strain>ATCC 15356 / DSM 50701 / NCIMB 9529 / HD100</strain>
    </source>
</reference>
<organism>
    <name type="scientific">Bdellovibrio bacteriovorus (strain ATCC 15356 / DSM 50701 / NCIMB 9529 / HD100)</name>
    <dbReference type="NCBI Taxonomy" id="264462"/>
    <lineage>
        <taxon>Bacteria</taxon>
        <taxon>Pseudomonadati</taxon>
        <taxon>Bdellovibrionota</taxon>
        <taxon>Bdellovibrionia</taxon>
        <taxon>Bdellovibrionales</taxon>
        <taxon>Pseudobdellovibrionaceae</taxon>
        <taxon>Bdellovibrio</taxon>
    </lineage>
</organism>
<proteinExistence type="inferred from homology"/>